<proteinExistence type="evidence at protein level"/>
<accession>P67960</accession>
<accession>P05586</accession>
<sequence>LAAVSVDCSEYPKPACTMEYRPLCGSDNKTYGNKCNFCNAVVESNGTLTLSHFGKC</sequence>
<evidence type="ECO:0000255" key="1">
    <source>
        <dbReference type="PROSITE-ProRule" id="PRU00798"/>
    </source>
</evidence>
<feature type="chain" id="PRO_0000073184" description="Ovomucoid">
    <location>
        <begin position="1" status="less than"/>
        <end position="56" status="greater than"/>
    </location>
</feature>
<feature type="domain" description="Kazal-like" evidence="1">
    <location>
        <begin position="6"/>
        <end position="56"/>
    </location>
</feature>
<feature type="site" description="Reactive bond 3">
    <location>
        <begin position="18"/>
        <end position="19"/>
    </location>
</feature>
<feature type="glycosylation site" description="N-linked (GlcNAc...) asparagine">
    <location>
        <position position="45"/>
    </location>
</feature>
<feature type="disulfide bond">
    <location>
        <begin position="8"/>
        <end position="38"/>
    </location>
</feature>
<feature type="disulfide bond">
    <location>
        <begin position="16"/>
        <end position="35"/>
    </location>
</feature>
<feature type="disulfide bond">
    <location>
        <begin position="24"/>
        <end position="56"/>
    </location>
</feature>
<feature type="non-terminal residue">
    <location>
        <position position="1"/>
    </location>
</feature>
<feature type="non-terminal residue">
    <location>
        <position position="56"/>
    </location>
</feature>
<protein>
    <recommendedName>
        <fullName>Ovomucoid</fullName>
    </recommendedName>
</protein>
<dbReference type="SMR" id="P67960"/>
<dbReference type="GO" id="GO:0005615">
    <property type="term" value="C:extracellular space"/>
    <property type="evidence" value="ECO:0007669"/>
    <property type="project" value="UniProtKB-ARBA"/>
</dbReference>
<dbReference type="GO" id="GO:0004867">
    <property type="term" value="F:serine-type endopeptidase inhibitor activity"/>
    <property type="evidence" value="ECO:0007669"/>
    <property type="project" value="UniProtKB-KW"/>
</dbReference>
<dbReference type="CDD" id="cd00104">
    <property type="entry name" value="KAZAL_FS"/>
    <property type="match status" value="1"/>
</dbReference>
<dbReference type="FunFam" id="3.30.60.30:FF:000037">
    <property type="entry name" value="Ovomucoid"/>
    <property type="match status" value="1"/>
</dbReference>
<dbReference type="Gene3D" id="3.30.60.30">
    <property type="match status" value="1"/>
</dbReference>
<dbReference type="InterPro" id="IPR051597">
    <property type="entry name" value="Bifunctional_prot_inhibitor"/>
</dbReference>
<dbReference type="InterPro" id="IPR002350">
    <property type="entry name" value="Kazal_dom"/>
</dbReference>
<dbReference type="InterPro" id="IPR036058">
    <property type="entry name" value="Kazal_dom_sf"/>
</dbReference>
<dbReference type="InterPro" id="IPR001239">
    <property type="entry name" value="Prot_inh_Kazal-m"/>
</dbReference>
<dbReference type="PANTHER" id="PTHR47729:SF1">
    <property type="entry name" value="OVOMUCOID-LIKE-RELATED"/>
    <property type="match status" value="1"/>
</dbReference>
<dbReference type="PANTHER" id="PTHR47729">
    <property type="entry name" value="SERINE PEPTIDASE INHIBITOR, KAZAL TYPE 2, TANDEM DUPLICATE 1-RELATED"/>
    <property type="match status" value="1"/>
</dbReference>
<dbReference type="Pfam" id="PF00050">
    <property type="entry name" value="Kazal_1"/>
    <property type="match status" value="1"/>
</dbReference>
<dbReference type="PRINTS" id="PR00290">
    <property type="entry name" value="KAZALINHBTR"/>
</dbReference>
<dbReference type="SMART" id="SM00280">
    <property type="entry name" value="KAZAL"/>
    <property type="match status" value="1"/>
</dbReference>
<dbReference type="SUPFAM" id="SSF100895">
    <property type="entry name" value="Kazal-type serine protease inhibitors"/>
    <property type="match status" value="1"/>
</dbReference>
<dbReference type="PROSITE" id="PS00282">
    <property type="entry name" value="KAZAL_1"/>
    <property type="match status" value="1"/>
</dbReference>
<dbReference type="PROSITE" id="PS51465">
    <property type="entry name" value="KAZAL_2"/>
    <property type="match status" value="1"/>
</dbReference>
<organism>
    <name type="scientific">Syrmaticus soemmerringii</name>
    <name type="common">Copper pheasant</name>
    <name type="synonym">Phasianus soemmerringii</name>
    <dbReference type="NCBI Taxonomy" id="9067"/>
    <lineage>
        <taxon>Eukaryota</taxon>
        <taxon>Metazoa</taxon>
        <taxon>Chordata</taxon>
        <taxon>Craniata</taxon>
        <taxon>Vertebrata</taxon>
        <taxon>Euteleostomi</taxon>
        <taxon>Archelosauria</taxon>
        <taxon>Archosauria</taxon>
        <taxon>Dinosauria</taxon>
        <taxon>Saurischia</taxon>
        <taxon>Theropoda</taxon>
        <taxon>Coelurosauria</taxon>
        <taxon>Aves</taxon>
        <taxon>Neognathae</taxon>
        <taxon>Galloanserae</taxon>
        <taxon>Galliformes</taxon>
        <taxon>Phasianidae</taxon>
        <taxon>Phasianinae</taxon>
        <taxon>Syrmaticus</taxon>
    </lineage>
</organism>
<name>IOVO_SYRSO</name>
<comment type="subcellular location">
    <subcellularLocation>
        <location>Secreted</location>
    </subcellularLocation>
</comment>
<comment type="domain">
    <text>Avian ovomucoid consists of three homologous, tandem Kazal family inhibitory domains.</text>
</comment>
<reference key="1">
    <citation type="journal article" date="1987" name="Biochemistry">
        <title>Ovomucoid third domains from 100 avian species: isolation, sequences, and hypervariability of enzyme-inhibitor contact residues.</title>
        <authorList>
            <person name="Laskowski M. Jr."/>
            <person name="Kato I."/>
            <person name="Ardelt W."/>
            <person name="Cook J."/>
            <person name="Denton A."/>
            <person name="Empie M.W."/>
            <person name="Kohr W.J."/>
            <person name="Park S.J."/>
            <person name="Parks K."/>
            <person name="Schatzley B.L."/>
            <person name="Schoenberger O.L."/>
            <person name="Tashiro M."/>
            <person name="Vichot G."/>
            <person name="Whatley H.E."/>
            <person name="Wieczorek A."/>
            <person name="Wieczorek M."/>
        </authorList>
    </citation>
    <scope>PROTEIN SEQUENCE</scope>
</reference>
<reference key="2">
    <citation type="journal article" date="1990" name="J. Protein Chem.">
        <title>Amino acid sequences of ovomucoid third domain from 25 additional species of birds.</title>
        <authorList>
            <person name="Laskowski M. Jr."/>
            <person name="Apostol I."/>
            <person name="Ardelt W."/>
            <person name="Cook J."/>
            <person name="Giletto A."/>
            <person name="Kelly C.A."/>
            <person name="Lu W."/>
            <person name="Park S.J."/>
            <person name="Qasim M.A."/>
            <person name="Whatley H.E."/>
            <person name="Wieczorek A."/>
            <person name="Wynn R."/>
        </authorList>
    </citation>
    <scope>PROTEIN SEQUENCE</scope>
</reference>
<keyword id="KW-0903">Direct protein sequencing</keyword>
<keyword id="KW-1015">Disulfide bond</keyword>
<keyword id="KW-0325">Glycoprotein</keyword>
<keyword id="KW-0646">Protease inhibitor</keyword>
<keyword id="KW-0677">Repeat</keyword>
<keyword id="KW-0964">Secreted</keyword>
<keyword id="KW-0722">Serine protease inhibitor</keyword>